<proteinExistence type="inferred from homology"/>
<organism>
    <name type="scientific">Prochlorococcus marinus (strain SARG / CCMP1375 / SS120)</name>
    <dbReference type="NCBI Taxonomy" id="167539"/>
    <lineage>
        <taxon>Bacteria</taxon>
        <taxon>Bacillati</taxon>
        <taxon>Cyanobacteriota</taxon>
        <taxon>Cyanophyceae</taxon>
        <taxon>Synechococcales</taxon>
        <taxon>Prochlorococcaceae</taxon>
        <taxon>Prochlorococcus</taxon>
    </lineage>
</organism>
<keyword id="KW-0997">Cell inner membrane</keyword>
<keyword id="KW-1003">Cell membrane</keyword>
<keyword id="KW-0472">Membrane</keyword>
<keyword id="KW-1185">Reference proteome</keyword>
<sequence length="79" mass="9007">MIKKINAVISNLFLTLIRFYRSWISPLLGPSCRFVPTCSEYGVEAIEKHGPWKGGWLTLKRLLRCNPLTPCGYDPVPDK</sequence>
<accession>Q7VDG6</accession>
<name>YIDD_PROMA</name>
<protein>
    <recommendedName>
        <fullName evidence="1">Putative membrane protein insertion efficiency factor</fullName>
    </recommendedName>
</protein>
<reference key="1">
    <citation type="journal article" date="2003" name="Proc. Natl. Acad. Sci. U.S.A.">
        <title>Genome sequence of the cyanobacterium Prochlorococcus marinus SS120, a nearly minimal oxyphototrophic genome.</title>
        <authorList>
            <person name="Dufresne A."/>
            <person name="Salanoubat M."/>
            <person name="Partensky F."/>
            <person name="Artiguenave F."/>
            <person name="Axmann I.M."/>
            <person name="Barbe V."/>
            <person name="Duprat S."/>
            <person name="Galperin M.Y."/>
            <person name="Koonin E.V."/>
            <person name="Le Gall F."/>
            <person name="Makarova K.S."/>
            <person name="Ostrowski M."/>
            <person name="Oztas S."/>
            <person name="Robert C."/>
            <person name="Rogozin I.B."/>
            <person name="Scanlan D.J."/>
            <person name="Tandeau de Marsac N."/>
            <person name="Weissenbach J."/>
            <person name="Wincker P."/>
            <person name="Wolf Y.I."/>
            <person name="Hess W.R."/>
        </authorList>
    </citation>
    <scope>NUCLEOTIDE SEQUENCE [LARGE SCALE GENOMIC DNA]</scope>
    <source>
        <strain>SARG / CCMP1375 / SS120</strain>
    </source>
</reference>
<feature type="chain" id="PRO_0000171850" description="Putative membrane protein insertion efficiency factor">
    <location>
        <begin position="1"/>
        <end position="79"/>
    </location>
</feature>
<comment type="function">
    <text evidence="1">Could be involved in insertion of integral membrane proteins into the membrane.</text>
</comment>
<comment type="subcellular location">
    <subcellularLocation>
        <location evidence="1">Cell inner membrane</location>
        <topology evidence="1">Peripheral membrane protein</topology>
        <orientation evidence="1">Cytoplasmic side</orientation>
    </subcellularLocation>
</comment>
<comment type="similarity">
    <text evidence="1">Belongs to the UPF0161 family.</text>
</comment>
<evidence type="ECO:0000255" key="1">
    <source>
        <dbReference type="HAMAP-Rule" id="MF_00386"/>
    </source>
</evidence>
<dbReference type="EMBL" id="AE017126">
    <property type="protein sequence ID" value="AAP99456.1"/>
    <property type="molecule type" value="Genomic_DNA"/>
</dbReference>
<dbReference type="RefSeq" id="NP_874804.1">
    <property type="nucleotide sequence ID" value="NC_005042.1"/>
</dbReference>
<dbReference type="STRING" id="167539.Pro_0410"/>
<dbReference type="EnsemblBacteria" id="AAP99456">
    <property type="protein sequence ID" value="AAP99456"/>
    <property type="gene ID" value="Pro_0410"/>
</dbReference>
<dbReference type="KEGG" id="pma:Pro_0410"/>
<dbReference type="PATRIC" id="fig|167539.5.peg.419"/>
<dbReference type="eggNOG" id="COG0759">
    <property type="taxonomic scope" value="Bacteria"/>
</dbReference>
<dbReference type="HOGENOM" id="CLU_144811_6_1_3"/>
<dbReference type="OrthoDB" id="9801753at2"/>
<dbReference type="Proteomes" id="UP000001420">
    <property type="component" value="Chromosome"/>
</dbReference>
<dbReference type="GO" id="GO:0005886">
    <property type="term" value="C:plasma membrane"/>
    <property type="evidence" value="ECO:0007669"/>
    <property type="project" value="UniProtKB-SubCell"/>
</dbReference>
<dbReference type="HAMAP" id="MF_00386">
    <property type="entry name" value="UPF0161_YidD"/>
    <property type="match status" value="1"/>
</dbReference>
<dbReference type="InterPro" id="IPR002696">
    <property type="entry name" value="Membr_insert_effic_factor_YidD"/>
</dbReference>
<dbReference type="NCBIfam" id="TIGR00278">
    <property type="entry name" value="membrane protein insertion efficiency factor YidD"/>
    <property type="match status" value="1"/>
</dbReference>
<dbReference type="PANTHER" id="PTHR33383">
    <property type="entry name" value="MEMBRANE PROTEIN INSERTION EFFICIENCY FACTOR-RELATED"/>
    <property type="match status" value="1"/>
</dbReference>
<dbReference type="PANTHER" id="PTHR33383:SF1">
    <property type="entry name" value="MEMBRANE PROTEIN INSERTION EFFICIENCY FACTOR-RELATED"/>
    <property type="match status" value="1"/>
</dbReference>
<dbReference type="Pfam" id="PF01809">
    <property type="entry name" value="YidD"/>
    <property type="match status" value="1"/>
</dbReference>
<dbReference type="SMART" id="SM01234">
    <property type="entry name" value="Haemolytic"/>
    <property type="match status" value="1"/>
</dbReference>
<gene>
    <name type="ordered locus">Pro_0410</name>
</gene>